<reference key="1">
    <citation type="submission" date="2006-06" db="EMBL/GenBank/DDBJ databases">
        <authorList>
            <consortium name="NIH - Mammalian Gene Collection (MGC) project"/>
        </authorList>
    </citation>
    <scope>NUCLEOTIDE SEQUENCE [LARGE SCALE MRNA]</scope>
    <source>
        <strain>Hereford</strain>
        <tissue>Fetal skin</tissue>
    </source>
</reference>
<proteinExistence type="evidence at transcript level"/>
<gene>
    <name evidence="3" type="primary">ACSF2</name>
</gene>
<dbReference type="EC" id="6.2.1.2" evidence="3"/>
<dbReference type="EMBL" id="BC118331">
    <property type="protein sequence ID" value="AAI18332.1"/>
    <property type="molecule type" value="mRNA"/>
</dbReference>
<dbReference type="RefSeq" id="NP_001071580.1">
    <property type="nucleotide sequence ID" value="NM_001078112.1"/>
</dbReference>
<dbReference type="SMR" id="Q17QJ1"/>
<dbReference type="FunCoup" id="Q17QJ1">
    <property type="interactions" value="1165"/>
</dbReference>
<dbReference type="STRING" id="9913.ENSBTAP00000028385"/>
<dbReference type="PaxDb" id="9913-ENSBTAP00000028385"/>
<dbReference type="Ensembl" id="ENSBTAT00000028385.6">
    <property type="protein sequence ID" value="ENSBTAP00000028385.5"/>
    <property type="gene ID" value="ENSBTAG00000021301.6"/>
</dbReference>
<dbReference type="GeneID" id="768237"/>
<dbReference type="KEGG" id="bta:768237"/>
<dbReference type="CTD" id="80221"/>
<dbReference type="VEuPathDB" id="HostDB:ENSBTAG00000021301"/>
<dbReference type="VGNC" id="VGNC:25562">
    <property type="gene designation" value="ACSF2"/>
</dbReference>
<dbReference type="eggNOG" id="KOG1177">
    <property type="taxonomic scope" value="Eukaryota"/>
</dbReference>
<dbReference type="GeneTree" id="ENSGT00940000156830"/>
<dbReference type="HOGENOM" id="CLU_000022_59_7_1"/>
<dbReference type="InParanoid" id="Q17QJ1"/>
<dbReference type="OMA" id="ICCRGYN"/>
<dbReference type="OrthoDB" id="10253115at2759"/>
<dbReference type="Reactome" id="R-BTA-77289">
    <property type="pathway name" value="Mitochondrial Fatty Acid Beta-Oxidation"/>
</dbReference>
<dbReference type="Proteomes" id="UP000009136">
    <property type="component" value="Chromosome 19"/>
</dbReference>
<dbReference type="Bgee" id="ENSBTAG00000021301">
    <property type="expression patterns" value="Expressed in ruminant reticulum and 104 other cell types or tissues"/>
</dbReference>
<dbReference type="GO" id="GO:0005739">
    <property type="term" value="C:mitochondrion"/>
    <property type="evidence" value="ECO:0007669"/>
    <property type="project" value="UniProtKB-SubCell"/>
</dbReference>
<dbReference type="GO" id="GO:0005524">
    <property type="term" value="F:ATP binding"/>
    <property type="evidence" value="ECO:0007669"/>
    <property type="project" value="UniProtKB-KW"/>
</dbReference>
<dbReference type="GO" id="GO:0031956">
    <property type="term" value="F:medium-chain fatty acid-CoA ligase activity"/>
    <property type="evidence" value="ECO:0000250"/>
    <property type="project" value="UniProtKB"/>
</dbReference>
<dbReference type="GO" id="GO:0006631">
    <property type="term" value="P:fatty acid metabolic process"/>
    <property type="evidence" value="ECO:0000318"/>
    <property type="project" value="GO_Central"/>
</dbReference>
<dbReference type="CDD" id="cd05917">
    <property type="entry name" value="FACL_like_2"/>
    <property type="match status" value="1"/>
</dbReference>
<dbReference type="FunFam" id="3.30.300.30:FF:000008">
    <property type="entry name" value="2,3-dihydroxybenzoate-AMP ligase"/>
    <property type="match status" value="1"/>
</dbReference>
<dbReference type="FunFam" id="3.40.50.12780:FF:000003">
    <property type="entry name" value="Long-chain-fatty-acid--CoA ligase FadD"/>
    <property type="match status" value="1"/>
</dbReference>
<dbReference type="Gene3D" id="3.30.300.30">
    <property type="match status" value="1"/>
</dbReference>
<dbReference type="Gene3D" id="3.40.50.12780">
    <property type="entry name" value="N-terminal domain of ligase-like"/>
    <property type="match status" value="1"/>
</dbReference>
<dbReference type="InterPro" id="IPR025110">
    <property type="entry name" value="AMP-bd_C"/>
</dbReference>
<dbReference type="InterPro" id="IPR045851">
    <property type="entry name" value="AMP-bd_C_sf"/>
</dbReference>
<dbReference type="InterPro" id="IPR020845">
    <property type="entry name" value="AMP-binding_CS"/>
</dbReference>
<dbReference type="InterPro" id="IPR000873">
    <property type="entry name" value="AMP-dep_synth/lig_dom"/>
</dbReference>
<dbReference type="InterPro" id="IPR042099">
    <property type="entry name" value="ANL_N_sf"/>
</dbReference>
<dbReference type="PANTHER" id="PTHR43201">
    <property type="entry name" value="ACYL-COA SYNTHETASE"/>
    <property type="match status" value="1"/>
</dbReference>
<dbReference type="PANTHER" id="PTHR43201:SF5">
    <property type="entry name" value="MEDIUM-CHAIN ACYL-COA LIGASE ACSF2, MITOCHONDRIAL"/>
    <property type="match status" value="1"/>
</dbReference>
<dbReference type="Pfam" id="PF00501">
    <property type="entry name" value="AMP-binding"/>
    <property type="match status" value="1"/>
</dbReference>
<dbReference type="Pfam" id="PF13193">
    <property type="entry name" value="AMP-binding_C"/>
    <property type="match status" value="1"/>
</dbReference>
<dbReference type="SUPFAM" id="SSF56801">
    <property type="entry name" value="Acetyl-CoA synthetase-like"/>
    <property type="match status" value="1"/>
</dbReference>
<dbReference type="PROSITE" id="PS00455">
    <property type="entry name" value="AMP_BINDING"/>
    <property type="match status" value="1"/>
</dbReference>
<sequence>MAVYVGMLRVARLCARSPRVLGARVGLSRVWQEARLWGVRPLSSGELDHTVPLPVGGFSYVQGHVGLHLSNKTVGRCLDATAQRVPDQEALVVHHENIRLTFAQLKEEVDKAASGLLSIGLRKGDRLGMWGPNSYAWVLMQLATAQAGIILVSVNPAYQAMELEYALKKVGCKALVFPKQFKTQQYYNILKQICPEVEKAQPGALKSQRLPDLTTVISVDAHLPGTLLLDEVVAAGSQEQNLTRLRHTQQFLSCHDPINIQFTSGTTGSPKGATLSHYNIVNNANMIGQRLRLHQKTPEESRVVLPSPLYHCLGSVGGTMVSLMHGVTLILCSPVFEGKKTLEAISRERGCFLYGTPTMFVDVLNQPDFSSYDISTMRGGVIAGSPAPPELIRAIINKLNMKELVVAYGTTENSPVTFMNFTEDTVEQKAESVGRVMPHTEAQIVNTETGTLTELNTPGELCIRGYCVMLGYWGEPQKTEEAIGQDKWYRTGDIAMMDEQGFCKIVGRSKDMIIRGGENIYPAELEDFFHTHPQVQEVQVVGVKDDRMGEEICACIRLKEGEKTTAEEIKAFCKGKISHFKIPRYIVFVTNYPLTVSGKIQKFKLREQMEQHLNL</sequence>
<accession>Q17QJ1</accession>
<comment type="function">
    <text evidence="3">Acyl-CoA synthases catalyze the initial reaction in fatty acid metabolism, by forming a thioester with CoA. Has some preference toward medium-chain substrates. Plays a role in adipocyte differentiation.</text>
</comment>
<comment type="catalytic activity">
    <reaction evidence="3">
        <text>a medium-chain fatty acid + ATP + CoA = a medium-chain fatty acyl-CoA + AMP + diphosphate</text>
        <dbReference type="Rhea" id="RHEA:48340"/>
        <dbReference type="ChEBI" id="CHEBI:30616"/>
        <dbReference type="ChEBI" id="CHEBI:33019"/>
        <dbReference type="ChEBI" id="CHEBI:57287"/>
        <dbReference type="ChEBI" id="CHEBI:59558"/>
        <dbReference type="ChEBI" id="CHEBI:90546"/>
        <dbReference type="ChEBI" id="CHEBI:456215"/>
        <dbReference type="EC" id="6.2.1.2"/>
    </reaction>
</comment>
<comment type="catalytic activity">
    <reaction evidence="3">
        <text>octanoate + ATP + CoA = octanoyl-CoA + AMP + diphosphate</text>
        <dbReference type="Rhea" id="RHEA:33631"/>
        <dbReference type="ChEBI" id="CHEBI:25646"/>
        <dbReference type="ChEBI" id="CHEBI:30616"/>
        <dbReference type="ChEBI" id="CHEBI:33019"/>
        <dbReference type="ChEBI" id="CHEBI:57287"/>
        <dbReference type="ChEBI" id="CHEBI:57386"/>
        <dbReference type="ChEBI" id="CHEBI:456215"/>
    </reaction>
</comment>
<comment type="subcellular location">
    <subcellularLocation>
        <location evidence="5">Mitochondrion</location>
    </subcellularLocation>
</comment>
<comment type="similarity">
    <text evidence="5">Belongs to the ATP-dependent AMP-binding enzyme family.</text>
</comment>
<name>ACSF2_BOVIN</name>
<evidence type="ECO:0000250" key="1"/>
<evidence type="ECO:0000250" key="2">
    <source>
        <dbReference type="UniProtKB" id="Q8VCW8"/>
    </source>
</evidence>
<evidence type="ECO:0000250" key="3">
    <source>
        <dbReference type="UniProtKB" id="Q96CM8"/>
    </source>
</evidence>
<evidence type="ECO:0000255" key="4"/>
<evidence type="ECO:0000305" key="5"/>
<organism>
    <name type="scientific">Bos taurus</name>
    <name type="common">Bovine</name>
    <dbReference type="NCBI Taxonomy" id="9913"/>
    <lineage>
        <taxon>Eukaryota</taxon>
        <taxon>Metazoa</taxon>
        <taxon>Chordata</taxon>
        <taxon>Craniata</taxon>
        <taxon>Vertebrata</taxon>
        <taxon>Euteleostomi</taxon>
        <taxon>Mammalia</taxon>
        <taxon>Eutheria</taxon>
        <taxon>Laurasiatheria</taxon>
        <taxon>Artiodactyla</taxon>
        <taxon>Ruminantia</taxon>
        <taxon>Pecora</taxon>
        <taxon>Bovidae</taxon>
        <taxon>Bovinae</taxon>
        <taxon>Bos</taxon>
    </lineage>
</organism>
<feature type="transit peptide" description="Mitochondrion" evidence="4">
    <location>
        <begin position="1"/>
        <end position="42"/>
    </location>
</feature>
<feature type="chain" id="PRO_0000315792" description="Medium-chain acyl-CoA ligase ACSF2, mitochondrial">
    <location>
        <begin position="43"/>
        <end position="615"/>
    </location>
</feature>
<feature type="binding site" evidence="1">
    <location>
        <begin position="263"/>
        <end position="271"/>
    </location>
    <ligand>
        <name>ATP</name>
        <dbReference type="ChEBI" id="CHEBI:30616"/>
    </ligand>
</feature>
<feature type="binding site" evidence="1">
    <location>
        <position position="493"/>
    </location>
    <ligand>
        <name>ATP</name>
        <dbReference type="ChEBI" id="CHEBI:30616"/>
    </ligand>
</feature>
<feature type="binding site" evidence="1">
    <location>
        <position position="508"/>
    </location>
    <ligand>
        <name>ATP</name>
        <dbReference type="ChEBI" id="CHEBI:30616"/>
    </ligand>
</feature>
<feature type="binding site" evidence="1">
    <location>
        <position position="599"/>
    </location>
    <ligand>
        <name>ATP</name>
        <dbReference type="ChEBI" id="CHEBI:30616"/>
    </ligand>
</feature>
<feature type="modified residue" description="N6-acetyllysine" evidence="2">
    <location>
        <position position="179"/>
    </location>
</feature>
<feature type="modified residue" description="N6-acetyllysine; alternate" evidence="2">
    <location>
        <position position="182"/>
    </location>
</feature>
<feature type="modified residue" description="N6-succinyllysine; alternate" evidence="2">
    <location>
        <position position="182"/>
    </location>
</feature>
<feature type="modified residue" description="N6-acetyllysine" evidence="2">
    <location>
        <position position="199"/>
    </location>
</feature>
<feature type="modified residue" description="N6-acetyllysine" evidence="2">
    <location>
        <position position="340"/>
    </location>
</feature>
<feature type="modified residue" description="N6-acetyllysine" evidence="2">
    <location>
        <position position="398"/>
    </location>
</feature>
<feature type="modified residue" description="N6-succinyllysine" evidence="2">
    <location>
        <position position="478"/>
    </location>
</feature>
<feature type="modified residue" description="N6-acetyllysine" evidence="2">
    <location>
        <position position="510"/>
    </location>
</feature>
<feature type="modified residue" description="N6-acetyllysine; alternate" evidence="2">
    <location>
        <position position="544"/>
    </location>
</feature>
<feature type="modified residue" description="N6-succinyllysine; alternate" evidence="2">
    <location>
        <position position="544"/>
    </location>
</feature>
<feature type="modified residue" description="N6-acetyllysine; alternate" evidence="2">
    <location>
        <position position="570"/>
    </location>
</feature>
<feature type="modified residue" description="N6-succinyllysine; alternate" evidence="2">
    <location>
        <position position="570"/>
    </location>
</feature>
<feature type="modified residue" description="N6-succinyllysine" evidence="2">
    <location>
        <position position="599"/>
    </location>
</feature>
<protein>
    <recommendedName>
        <fullName evidence="3">Medium-chain acyl-CoA ligase ACSF2, mitochondrial</fullName>
        <ecNumber evidence="3">6.2.1.2</ecNumber>
    </recommendedName>
</protein>
<keyword id="KW-0007">Acetylation</keyword>
<keyword id="KW-0067">ATP-binding</keyword>
<keyword id="KW-0276">Fatty acid metabolism</keyword>
<keyword id="KW-0436">Ligase</keyword>
<keyword id="KW-0443">Lipid metabolism</keyword>
<keyword id="KW-0496">Mitochondrion</keyword>
<keyword id="KW-0547">Nucleotide-binding</keyword>
<keyword id="KW-1185">Reference proteome</keyword>
<keyword id="KW-0809">Transit peptide</keyword>